<dbReference type="EMBL" id="AE009442">
    <property type="protein sequence ID" value="AAO29866.1"/>
    <property type="molecule type" value="Genomic_DNA"/>
</dbReference>
<dbReference type="SMR" id="Q879Z7"/>
<dbReference type="KEGG" id="xft:PD_2042"/>
<dbReference type="HOGENOM" id="CLU_023403_2_0_6"/>
<dbReference type="UniPathway" id="UPA00637"/>
<dbReference type="Proteomes" id="UP000002516">
    <property type="component" value="Chromosome"/>
</dbReference>
<dbReference type="GO" id="GO:0030288">
    <property type="term" value="C:outer membrane-bounded periplasmic space"/>
    <property type="evidence" value="ECO:0007669"/>
    <property type="project" value="TreeGrafter"/>
</dbReference>
<dbReference type="GO" id="GO:0030246">
    <property type="term" value="F:carbohydrate binding"/>
    <property type="evidence" value="ECO:0007669"/>
    <property type="project" value="InterPro"/>
</dbReference>
<dbReference type="GO" id="GO:0003824">
    <property type="term" value="F:catalytic activity"/>
    <property type="evidence" value="ECO:0007669"/>
    <property type="project" value="InterPro"/>
</dbReference>
<dbReference type="GO" id="GO:0051274">
    <property type="term" value="P:beta-glucan biosynthetic process"/>
    <property type="evidence" value="ECO:0007669"/>
    <property type="project" value="TreeGrafter"/>
</dbReference>
<dbReference type="FunFam" id="2.70.98.10:FF:000001">
    <property type="entry name" value="Glucans biosynthesis protein G"/>
    <property type="match status" value="1"/>
</dbReference>
<dbReference type="Gene3D" id="2.70.98.10">
    <property type="match status" value="1"/>
</dbReference>
<dbReference type="Gene3D" id="2.60.40.10">
    <property type="entry name" value="Immunoglobulins"/>
    <property type="match status" value="1"/>
</dbReference>
<dbReference type="HAMAP" id="MF_01068">
    <property type="entry name" value="MdoD_OpgD"/>
    <property type="match status" value="1"/>
</dbReference>
<dbReference type="InterPro" id="IPR011013">
    <property type="entry name" value="Gal_mutarotase_sf_dom"/>
</dbReference>
<dbReference type="InterPro" id="IPR014718">
    <property type="entry name" value="GH-type_carb-bd"/>
</dbReference>
<dbReference type="InterPro" id="IPR023724">
    <property type="entry name" value="Glucan_biosyn_MdoD"/>
</dbReference>
<dbReference type="InterPro" id="IPR014438">
    <property type="entry name" value="Glucan_biosyn_MdoG/MdoD"/>
</dbReference>
<dbReference type="InterPro" id="IPR007444">
    <property type="entry name" value="Glucan_biosyn_MdoG_C"/>
</dbReference>
<dbReference type="InterPro" id="IPR013783">
    <property type="entry name" value="Ig-like_fold"/>
</dbReference>
<dbReference type="InterPro" id="IPR014756">
    <property type="entry name" value="Ig_E-set"/>
</dbReference>
<dbReference type="InterPro" id="IPR006311">
    <property type="entry name" value="TAT_signal"/>
</dbReference>
<dbReference type="PANTHER" id="PTHR30504">
    <property type="entry name" value="GLUCANS BIOSYNTHESIS PROTEIN"/>
    <property type="match status" value="1"/>
</dbReference>
<dbReference type="PANTHER" id="PTHR30504:SF3">
    <property type="entry name" value="GLUCANS BIOSYNTHESIS PROTEIN D"/>
    <property type="match status" value="1"/>
</dbReference>
<dbReference type="Pfam" id="PF04349">
    <property type="entry name" value="MdoG"/>
    <property type="match status" value="1"/>
</dbReference>
<dbReference type="PIRSF" id="PIRSF006281">
    <property type="entry name" value="MdoG"/>
    <property type="match status" value="1"/>
</dbReference>
<dbReference type="SUPFAM" id="SSF81296">
    <property type="entry name" value="E set domains"/>
    <property type="match status" value="1"/>
</dbReference>
<dbReference type="SUPFAM" id="SSF74650">
    <property type="entry name" value="Galactose mutarotase-like"/>
    <property type="match status" value="1"/>
</dbReference>
<dbReference type="PROSITE" id="PS51318">
    <property type="entry name" value="TAT"/>
    <property type="match status" value="1"/>
</dbReference>
<protein>
    <recommendedName>
        <fullName>Glucans biosynthesis protein D</fullName>
    </recommendedName>
</protein>
<reference key="1">
    <citation type="journal article" date="2003" name="J. Bacteriol.">
        <title>Comparative analyses of the complete genome sequences of Pierce's disease and citrus variegated chlorosis strains of Xylella fastidiosa.</title>
        <authorList>
            <person name="Van Sluys M.A."/>
            <person name="de Oliveira M.C."/>
            <person name="Monteiro-Vitorello C.B."/>
            <person name="Miyaki C.Y."/>
            <person name="Furlan L.R."/>
            <person name="Camargo L.E.A."/>
            <person name="da Silva A.C.R."/>
            <person name="Moon D.H."/>
            <person name="Takita M.A."/>
            <person name="Lemos E.G.M."/>
            <person name="Machado M.A."/>
            <person name="Ferro M.I.T."/>
            <person name="da Silva F.R."/>
            <person name="Goldman M.H.S."/>
            <person name="Goldman G.H."/>
            <person name="Lemos M.V.F."/>
            <person name="El-Dorry H."/>
            <person name="Tsai S.M."/>
            <person name="Carrer H."/>
            <person name="Carraro D.M."/>
            <person name="de Oliveira R.C."/>
            <person name="Nunes L.R."/>
            <person name="Siqueira W.J."/>
            <person name="Coutinho L.L."/>
            <person name="Kimura E.T."/>
            <person name="Ferro E.S."/>
            <person name="Harakava R."/>
            <person name="Kuramae E.E."/>
            <person name="Marino C.L."/>
            <person name="Giglioti E."/>
            <person name="Abreu I.L."/>
            <person name="Alves L.M.C."/>
            <person name="do Amaral A.M."/>
            <person name="Baia G.S."/>
            <person name="Blanco S.R."/>
            <person name="Brito M.S."/>
            <person name="Cannavan F.S."/>
            <person name="Celestino A.V."/>
            <person name="da Cunha A.F."/>
            <person name="Fenille R.C."/>
            <person name="Ferro J.A."/>
            <person name="Formighieri E.F."/>
            <person name="Kishi L.T."/>
            <person name="Leoni S.G."/>
            <person name="Oliveira A.R."/>
            <person name="Rosa V.E. Jr."/>
            <person name="Sassaki F.T."/>
            <person name="Sena J.A.D."/>
            <person name="de Souza A.A."/>
            <person name="Truffi D."/>
            <person name="Tsukumo F."/>
            <person name="Yanai G.M."/>
            <person name="Zaros L.G."/>
            <person name="Civerolo E.L."/>
            <person name="Simpson A.J.G."/>
            <person name="Almeida N.F. Jr."/>
            <person name="Setubal J.C."/>
            <person name="Kitajima J.P."/>
        </authorList>
    </citation>
    <scope>NUCLEOTIDE SEQUENCE [LARGE SCALE GENOMIC DNA]</scope>
    <source>
        <strain>Temecula1 / ATCC 700964</strain>
    </source>
</reference>
<sequence>MLMYRRDFLKSVTAAWVAFGLPNPLGGAFATNRVIPLRRLGQSQRFDYEWLKERARALAATPYHSRKRVLPTPLERLSWDQYQSIRYRQDHALWADSDAHFQVKFFHLGLYFHSPVRMYEVVDGMAQELAYDPAAFDYGSSGLNGKGLPKDLGFAGFRLNTRKDIDRDFAAFLGASYFRAVGQEGQYGQSARGLAVNTGSSGPEEFPDFIAYYLEQPTADADTVVMYGLLDSPSIAGAYRFSITHADVLRMDIDSALYPRETIERLGIAPCTSMYQVGENDRRMGWDWRPEIHDTDGLFLWTGNGEWIWRPLCNPLHLRFNMFLDNNPRGFGLLQRDRDFDHYQDDGVFYEKRPCLWVEPKHGWGEGSVQLVEIPTFDETFDNIVAFWNPRNKPHPGQELLFGYRLYWGAFPPVSSSLAYCVATRTGLGGVVGQKRKYFSWRFAVDFVGGKLAALARVHDVSVEPVLHMTRGRPEIVSARPLHEIRGYRVMFDVVPLEDSAQQIDIRLYLRDTNGEPLTETWLYQWVPPILEERKY</sequence>
<feature type="signal peptide" description="Tat-type signal" evidence="2">
    <location>
        <begin position="1"/>
        <end position="30"/>
    </location>
</feature>
<feature type="chain" id="PRO_0000020219" description="Glucans biosynthesis protein D">
    <location>
        <begin position="31"/>
        <end position="536"/>
    </location>
</feature>
<keyword id="KW-0574">Periplasm</keyword>
<keyword id="KW-1185">Reference proteome</keyword>
<keyword id="KW-0732">Signal</keyword>
<evidence type="ECO:0000250" key="1"/>
<evidence type="ECO:0000255" key="2"/>
<evidence type="ECO:0000305" key="3"/>
<comment type="function">
    <text evidence="1">Probably involved in the control of the structural glucose backbone of osmoregulated periplasmic glucans (OPGs).</text>
</comment>
<comment type="pathway">
    <text>Glycan metabolism; osmoregulated periplasmic glucan (OPG) biosynthesis.</text>
</comment>
<comment type="subcellular location">
    <subcellularLocation>
        <location evidence="1">Periplasm</location>
    </subcellularLocation>
</comment>
<comment type="PTM">
    <text>Predicted to be exported by the Tat system. The position of the signal peptide cleavage has not been experimentally proven.</text>
</comment>
<comment type="similarity">
    <text evidence="3">Belongs to the OpgD/OpgG family.</text>
</comment>
<gene>
    <name type="primary">opgD</name>
    <name type="ordered locus">PD_2042</name>
</gene>
<organism>
    <name type="scientific">Xylella fastidiosa (strain Temecula1 / ATCC 700964)</name>
    <dbReference type="NCBI Taxonomy" id="183190"/>
    <lineage>
        <taxon>Bacteria</taxon>
        <taxon>Pseudomonadati</taxon>
        <taxon>Pseudomonadota</taxon>
        <taxon>Gammaproteobacteria</taxon>
        <taxon>Lysobacterales</taxon>
        <taxon>Lysobacteraceae</taxon>
        <taxon>Xylella</taxon>
    </lineage>
</organism>
<name>OPGD_XYLFT</name>
<accession>Q879Z7</accession>
<proteinExistence type="inferred from homology"/>